<reference key="1">
    <citation type="journal article" date="1989" name="Mol. Biochem. Parasitol.">
        <title>Characterization of a large gene family in Schistosoma japonicum that encodes an immunogenic miracidial antigen.</title>
        <authorList>
            <person name="Scallon B.J."/>
            <person name="Bogitsh B.J."/>
            <person name="Carter C.E."/>
        </authorList>
    </citation>
    <scope>NUCLEOTIDE SEQUENCE [GENOMIC DNA]</scope>
    <source>
        <strain>Philippines</strain>
    </source>
</reference>
<dbReference type="EMBL" id="M26213">
    <property type="protein sequence ID" value="AAA29852.1"/>
    <property type="molecule type" value="Genomic_DNA"/>
</dbReference>
<dbReference type="InterPro" id="IPR026240">
    <property type="entry name" value="Miracidia_Ag_8I"/>
</dbReference>
<dbReference type="PRINTS" id="PR02101">
    <property type="entry name" value="A8IMIRACIDIA"/>
</dbReference>
<sequence>EFTISFSSPVISTGQHIDVGDEDYHDGDDDVDYTDDVDDVDDSHGSPSQLLQGGYQRNQHYGGGNYQSGYYRPNKQHGNGYGGQYPKKYGSGHKY</sequence>
<comment type="developmental stage">
    <text>Miracidia.</text>
</comment>
<comment type="similarity">
    <text evidence="2">Belongs to the immunogenic miracidial antigen family.</text>
</comment>
<organism>
    <name type="scientific">Schistosoma japonicum</name>
    <name type="common">Blood fluke</name>
    <dbReference type="NCBI Taxonomy" id="6182"/>
    <lineage>
        <taxon>Eukaryota</taxon>
        <taxon>Metazoa</taxon>
        <taxon>Spiralia</taxon>
        <taxon>Lophotrochozoa</taxon>
        <taxon>Platyhelminthes</taxon>
        <taxon>Trematoda</taxon>
        <taxon>Digenea</taxon>
        <taxon>Strigeidida</taxon>
        <taxon>Schistosomatoidea</taxon>
        <taxon>Schistosomatidae</taxon>
        <taxon>Schistosoma</taxon>
    </lineage>
</organism>
<protein>
    <recommendedName>
        <fullName>Immunogenic miracidial antigen 8C</fullName>
    </recommendedName>
</protein>
<accession>P13523</accession>
<feature type="chain" id="PRO_0000084544" description="Immunogenic miracidial antigen 8C">
    <location>
        <begin position="1" status="less than"/>
        <end position="95"/>
    </location>
</feature>
<feature type="region of interest" description="Disordered" evidence="1">
    <location>
        <begin position="1"/>
        <end position="95"/>
    </location>
</feature>
<feature type="compositionally biased region" description="Polar residues" evidence="1">
    <location>
        <begin position="1"/>
        <end position="15"/>
    </location>
</feature>
<feature type="compositionally biased region" description="Acidic residues" evidence="1">
    <location>
        <begin position="20"/>
        <end position="41"/>
    </location>
</feature>
<feature type="compositionally biased region" description="Polar residues" evidence="1">
    <location>
        <begin position="45"/>
        <end position="59"/>
    </location>
</feature>
<feature type="non-terminal residue">
    <location>
        <position position="1"/>
    </location>
</feature>
<name>MA8C_SCHJA</name>
<gene>
    <name type="primary">8C</name>
</gene>
<evidence type="ECO:0000256" key="1">
    <source>
        <dbReference type="SAM" id="MobiDB-lite"/>
    </source>
</evidence>
<evidence type="ECO:0000305" key="2"/>
<proteinExistence type="evidence at transcript level"/>